<name>RNPA_CYAP4</name>
<comment type="function">
    <text evidence="1">RNaseP catalyzes the removal of the 5'-leader sequence from pre-tRNA to produce the mature 5'-terminus. It can also cleave other RNA substrates such as 4.5S RNA. The protein component plays an auxiliary but essential role in vivo by binding to the 5'-leader sequence and broadening the substrate specificity of the ribozyme.</text>
</comment>
<comment type="catalytic activity">
    <reaction evidence="1">
        <text>Endonucleolytic cleavage of RNA, removing 5'-extranucleotides from tRNA precursor.</text>
        <dbReference type="EC" id="3.1.26.5"/>
    </reaction>
</comment>
<comment type="subunit">
    <text evidence="1">Consists of a catalytic RNA component (M1 or rnpB) and a protein subunit.</text>
</comment>
<comment type="similarity">
    <text evidence="1">Belongs to the RnpA family.</text>
</comment>
<sequence>MLAKPYRLRKRQDFTAVYQQGKRWNSSHLALRTYPRRRSALALDGVKQSALNSREPPRIGISISQKVSKRAVVRNRIKRQLRAILRGLLPYLQPGWDLVIVVRPTAVECDYQQFLQELKQLLSEAEILHGY</sequence>
<accession>B8HR50</accession>
<evidence type="ECO:0000255" key="1">
    <source>
        <dbReference type="HAMAP-Rule" id="MF_00227"/>
    </source>
</evidence>
<protein>
    <recommendedName>
        <fullName evidence="1">Ribonuclease P protein component</fullName>
        <shortName evidence="1">RNase P protein</shortName>
        <shortName evidence="1">RNaseP protein</shortName>
        <ecNumber evidence="1">3.1.26.5</ecNumber>
    </recommendedName>
    <alternativeName>
        <fullName evidence="1">Protein C5</fullName>
    </alternativeName>
</protein>
<gene>
    <name evidence="1" type="primary">rnpA</name>
    <name type="ordered locus">Cyan7425_5267</name>
</gene>
<feature type="chain" id="PRO_1000204341" description="Ribonuclease P protein component">
    <location>
        <begin position="1"/>
        <end position="131"/>
    </location>
</feature>
<organism>
    <name type="scientific">Cyanothece sp. (strain PCC 7425 / ATCC 29141)</name>
    <dbReference type="NCBI Taxonomy" id="395961"/>
    <lineage>
        <taxon>Bacteria</taxon>
        <taxon>Bacillati</taxon>
        <taxon>Cyanobacteriota</taxon>
        <taxon>Cyanophyceae</taxon>
        <taxon>Gomontiellales</taxon>
        <taxon>Cyanothecaceae</taxon>
        <taxon>Cyanothece</taxon>
    </lineage>
</organism>
<proteinExistence type="inferred from homology"/>
<keyword id="KW-0255">Endonuclease</keyword>
<keyword id="KW-0378">Hydrolase</keyword>
<keyword id="KW-0540">Nuclease</keyword>
<keyword id="KW-0694">RNA-binding</keyword>
<keyword id="KW-0819">tRNA processing</keyword>
<reference key="1">
    <citation type="journal article" date="2011" name="MBio">
        <title>Novel metabolic attributes of the genus Cyanothece, comprising a group of unicellular nitrogen-fixing Cyanobacteria.</title>
        <authorList>
            <person name="Bandyopadhyay A."/>
            <person name="Elvitigala T."/>
            <person name="Welsh E."/>
            <person name="Stockel J."/>
            <person name="Liberton M."/>
            <person name="Min H."/>
            <person name="Sherman L.A."/>
            <person name="Pakrasi H.B."/>
        </authorList>
    </citation>
    <scope>NUCLEOTIDE SEQUENCE [LARGE SCALE GENOMIC DNA]</scope>
    <source>
        <strain>PCC 7425 / ATCC 29141</strain>
    </source>
</reference>
<dbReference type="EC" id="3.1.26.5" evidence="1"/>
<dbReference type="EMBL" id="CP001344">
    <property type="protein sequence ID" value="ACL47558.1"/>
    <property type="molecule type" value="Genomic_DNA"/>
</dbReference>
<dbReference type="SMR" id="B8HR50"/>
<dbReference type="STRING" id="395961.Cyan7425_5267"/>
<dbReference type="KEGG" id="cyn:Cyan7425_5267"/>
<dbReference type="eggNOG" id="COG0594">
    <property type="taxonomic scope" value="Bacteria"/>
</dbReference>
<dbReference type="HOGENOM" id="CLU_117179_9_0_3"/>
<dbReference type="OrthoDB" id="458878at2"/>
<dbReference type="GO" id="GO:0030677">
    <property type="term" value="C:ribonuclease P complex"/>
    <property type="evidence" value="ECO:0007669"/>
    <property type="project" value="TreeGrafter"/>
</dbReference>
<dbReference type="GO" id="GO:0042781">
    <property type="term" value="F:3'-tRNA processing endoribonuclease activity"/>
    <property type="evidence" value="ECO:0007669"/>
    <property type="project" value="TreeGrafter"/>
</dbReference>
<dbReference type="GO" id="GO:0004526">
    <property type="term" value="F:ribonuclease P activity"/>
    <property type="evidence" value="ECO:0007669"/>
    <property type="project" value="UniProtKB-UniRule"/>
</dbReference>
<dbReference type="GO" id="GO:0000049">
    <property type="term" value="F:tRNA binding"/>
    <property type="evidence" value="ECO:0007669"/>
    <property type="project" value="UniProtKB-UniRule"/>
</dbReference>
<dbReference type="GO" id="GO:0001682">
    <property type="term" value="P:tRNA 5'-leader removal"/>
    <property type="evidence" value="ECO:0007669"/>
    <property type="project" value="UniProtKB-UniRule"/>
</dbReference>
<dbReference type="Gene3D" id="3.30.230.10">
    <property type="match status" value="1"/>
</dbReference>
<dbReference type="HAMAP" id="MF_00227">
    <property type="entry name" value="RNase_P"/>
    <property type="match status" value="1"/>
</dbReference>
<dbReference type="InterPro" id="IPR020568">
    <property type="entry name" value="Ribosomal_Su5_D2-typ_SF"/>
</dbReference>
<dbReference type="InterPro" id="IPR014721">
    <property type="entry name" value="Ribsml_uS5_D2-typ_fold_subgr"/>
</dbReference>
<dbReference type="InterPro" id="IPR000100">
    <property type="entry name" value="RNase_P"/>
</dbReference>
<dbReference type="InterPro" id="IPR020539">
    <property type="entry name" value="RNase_P_CS"/>
</dbReference>
<dbReference type="NCBIfam" id="TIGR00188">
    <property type="entry name" value="rnpA"/>
    <property type="match status" value="1"/>
</dbReference>
<dbReference type="PANTHER" id="PTHR33992">
    <property type="entry name" value="RIBONUCLEASE P PROTEIN COMPONENT"/>
    <property type="match status" value="1"/>
</dbReference>
<dbReference type="PANTHER" id="PTHR33992:SF1">
    <property type="entry name" value="RIBONUCLEASE P PROTEIN COMPONENT"/>
    <property type="match status" value="1"/>
</dbReference>
<dbReference type="Pfam" id="PF00825">
    <property type="entry name" value="Ribonuclease_P"/>
    <property type="match status" value="1"/>
</dbReference>
<dbReference type="SUPFAM" id="SSF54211">
    <property type="entry name" value="Ribosomal protein S5 domain 2-like"/>
    <property type="match status" value="1"/>
</dbReference>
<dbReference type="PROSITE" id="PS00648">
    <property type="entry name" value="RIBONUCLEASE_P"/>
    <property type="match status" value="1"/>
</dbReference>